<protein>
    <recommendedName>
        <fullName>Superoxide dismutase [Mn], mitochondrial</fullName>
        <ecNumber>1.15.1.1</ecNumber>
    </recommendedName>
</protein>
<keyword id="KW-0007">Acetylation</keyword>
<keyword id="KW-0464">Manganese</keyword>
<keyword id="KW-0479">Metal-binding</keyword>
<keyword id="KW-0496">Mitochondrion</keyword>
<keyword id="KW-0944">Nitration</keyword>
<keyword id="KW-0560">Oxidoreductase</keyword>
<keyword id="KW-1185">Reference proteome</keyword>
<keyword id="KW-0809">Transit peptide</keyword>
<keyword id="KW-0832">Ubl conjugation</keyword>
<accession>Q8HXP3</accession>
<accession>Q2PFT1</accession>
<feature type="transit peptide" description="Mitochondrion" evidence="1">
    <location>
        <begin position="1"/>
        <end position="24"/>
    </location>
</feature>
<feature type="chain" id="PRO_0000159953" description="Superoxide dismutase [Mn], mitochondrial">
    <location>
        <begin position="25"/>
        <end position="222"/>
    </location>
</feature>
<feature type="binding site" evidence="1">
    <location>
        <position position="50"/>
    </location>
    <ligand>
        <name>Mn(2+)</name>
        <dbReference type="ChEBI" id="CHEBI:29035"/>
    </ligand>
</feature>
<feature type="binding site" evidence="1">
    <location>
        <position position="98"/>
    </location>
    <ligand>
        <name>Mn(2+)</name>
        <dbReference type="ChEBI" id="CHEBI:29035"/>
    </ligand>
</feature>
<feature type="binding site" evidence="1">
    <location>
        <position position="183"/>
    </location>
    <ligand>
        <name>Mn(2+)</name>
        <dbReference type="ChEBI" id="CHEBI:29035"/>
    </ligand>
</feature>
<feature type="binding site" evidence="1">
    <location>
        <position position="187"/>
    </location>
    <ligand>
        <name>Mn(2+)</name>
        <dbReference type="ChEBI" id="CHEBI:29035"/>
    </ligand>
</feature>
<feature type="modified residue" description="3'-nitrotyrosine" evidence="2">
    <location>
        <position position="58"/>
    </location>
</feature>
<feature type="modified residue" description="N6-acetyllysine; alternate" evidence="2">
    <location>
        <position position="68"/>
    </location>
</feature>
<feature type="modified residue" description="N6-succinyllysine; alternate" evidence="4">
    <location>
        <position position="68"/>
    </location>
</feature>
<feature type="modified residue" description="N6-acetyllysine; alternate" evidence="4">
    <location>
        <position position="75"/>
    </location>
</feature>
<feature type="modified residue" description="N6-succinyllysine; alternate" evidence="4">
    <location>
        <position position="75"/>
    </location>
</feature>
<feature type="modified residue" description="N6-acetyllysine" evidence="4">
    <location>
        <position position="114"/>
    </location>
</feature>
<feature type="modified residue" description="N6-acetyllysine; alternate" evidence="4">
    <location>
        <position position="122"/>
    </location>
</feature>
<feature type="modified residue" description="N6-succinyllysine; alternate" evidence="4">
    <location>
        <position position="122"/>
    </location>
</feature>
<feature type="modified residue" description="N6-acetyllysine; alternate" evidence="2">
    <location>
        <position position="130"/>
    </location>
</feature>
<feature type="modified residue" description="N6-succinyllysine; alternate" evidence="4">
    <location>
        <position position="130"/>
    </location>
</feature>
<feature type="modified residue" description="N6-acetyllysine" evidence="4">
    <location>
        <position position="202"/>
    </location>
</feature>
<proteinExistence type="evidence at transcript level"/>
<comment type="function">
    <text evidence="3">Destroys superoxide anion radicals which are normally produced within the cells and which are toxic to biological systems.</text>
</comment>
<comment type="catalytic activity">
    <reaction>
        <text>2 superoxide + 2 H(+) = H2O2 + O2</text>
        <dbReference type="Rhea" id="RHEA:20696"/>
        <dbReference type="ChEBI" id="CHEBI:15378"/>
        <dbReference type="ChEBI" id="CHEBI:15379"/>
        <dbReference type="ChEBI" id="CHEBI:16240"/>
        <dbReference type="ChEBI" id="CHEBI:18421"/>
        <dbReference type="EC" id="1.15.1.1"/>
    </reaction>
</comment>
<comment type="cofactor">
    <cofactor evidence="2">
        <name>Mn(2+)</name>
        <dbReference type="ChEBI" id="CHEBI:29035"/>
    </cofactor>
    <text evidence="2">Binds 1 Mn(2+) ion per subunit.</text>
</comment>
<comment type="subunit">
    <text evidence="1">Homotetramer.</text>
</comment>
<comment type="subcellular location">
    <subcellularLocation>
        <location evidence="1">Mitochondrion matrix</location>
    </subcellularLocation>
</comment>
<comment type="PTM">
    <text evidence="3">Nitrated under oxidative stress. Nitration coupled with oxidation inhibits the catalytic activity.</text>
</comment>
<comment type="PTM">
    <text evidence="2">Acetylation at Lys-122 decreases enzymatic activity. Deacetylated by SIRT3 upon exposure to ionizing radiations or after long fasting (By similarity).</text>
</comment>
<comment type="PTM">
    <text evidence="2">Polyubiquitinated; leading to proteasomal degradation. Deubiquitinated by USP36 which increases protein stability.</text>
</comment>
<comment type="similarity">
    <text evidence="5">Belongs to the iron/manganese superoxide dismutase family.</text>
</comment>
<comment type="sequence caution" evidence="5">
    <conflict type="erroneous initiation">
        <sequence resource="EMBL-CDS" id="BAC20357"/>
    </conflict>
    <text>Extended N-terminus.</text>
</comment>
<dbReference type="EC" id="1.15.1.1"/>
<dbReference type="EMBL" id="AB220506">
    <property type="protein sequence ID" value="BAE73039.1"/>
    <property type="molecule type" value="mRNA"/>
</dbReference>
<dbReference type="EMBL" id="AB087278">
    <property type="protein sequence ID" value="BAC20357.1"/>
    <property type="status" value="ALT_INIT"/>
    <property type="molecule type" value="mRNA"/>
</dbReference>
<dbReference type="RefSeq" id="NP_001274560.1">
    <property type="nucleotide sequence ID" value="NM_001287631.1"/>
</dbReference>
<dbReference type="RefSeq" id="XP_005551576.1">
    <property type="nucleotide sequence ID" value="XM_005551519.4"/>
</dbReference>
<dbReference type="RefSeq" id="XP_015303876.1">
    <property type="nucleotide sequence ID" value="XM_015448390.1"/>
</dbReference>
<dbReference type="SMR" id="Q8HXP3"/>
<dbReference type="STRING" id="9541.ENSMFAP00000040270"/>
<dbReference type="Ensembl" id="ENSMFAT00000014537.2">
    <property type="protein sequence ID" value="ENSMFAP00000040270.1"/>
    <property type="gene ID" value="ENSMFAG00000046278.2"/>
</dbReference>
<dbReference type="GeneID" id="102123902"/>
<dbReference type="KEGG" id="mcf:102123902"/>
<dbReference type="CTD" id="6648"/>
<dbReference type="VEuPathDB" id="HostDB:ENSMFAG00000046278"/>
<dbReference type="eggNOG" id="KOG0876">
    <property type="taxonomic scope" value="Eukaryota"/>
</dbReference>
<dbReference type="GeneTree" id="ENSGT00390000011877"/>
<dbReference type="OrthoDB" id="219at314294"/>
<dbReference type="Proteomes" id="UP000233100">
    <property type="component" value="Chromosome 4"/>
</dbReference>
<dbReference type="Bgee" id="ENSMFAG00000046278">
    <property type="expression patterns" value="Expressed in heart and 13 other cell types or tissues"/>
</dbReference>
<dbReference type="GO" id="GO:0005759">
    <property type="term" value="C:mitochondrial matrix"/>
    <property type="evidence" value="ECO:0007669"/>
    <property type="project" value="UniProtKB-SubCell"/>
</dbReference>
<dbReference type="GO" id="GO:0030145">
    <property type="term" value="F:manganese ion binding"/>
    <property type="evidence" value="ECO:0000250"/>
    <property type="project" value="UniProtKB"/>
</dbReference>
<dbReference type="GO" id="GO:0004784">
    <property type="term" value="F:superoxide dismutase activity"/>
    <property type="evidence" value="ECO:0000250"/>
    <property type="project" value="UniProtKB"/>
</dbReference>
<dbReference type="GO" id="GO:0034599">
    <property type="term" value="P:cellular response to oxidative stress"/>
    <property type="evidence" value="ECO:0000250"/>
    <property type="project" value="UniProtKB"/>
</dbReference>
<dbReference type="GO" id="GO:0006357">
    <property type="term" value="P:regulation of transcription by RNA polymerase II"/>
    <property type="evidence" value="ECO:0000250"/>
    <property type="project" value="UniProtKB"/>
</dbReference>
<dbReference type="GO" id="GO:0006801">
    <property type="term" value="P:superoxide metabolic process"/>
    <property type="evidence" value="ECO:0000250"/>
    <property type="project" value="UniProtKB"/>
</dbReference>
<dbReference type="FunFam" id="1.10.287.990:FF:000001">
    <property type="entry name" value="Superoxide dismutase"/>
    <property type="match status" value="1"/>
</dbReference>
<dbReference type="FunFam" id="3.55.40.20:FF:000003">
    <property type="entry name" value="Superoxide dismutase [Mn], mitochondrial"/>
    <property type="match status" value="1"/>
</dbReference>
<dbReference type="Gene3D" id="1.10.287.990">
    <property type="entry name" value="Fe,Mn superoxide dismutase (SOD) domain"/>
    <property type="match status" value="1"/>
</dbReference>
<dbReference type="Gene3D" id="3.55.40.20">
    <property type="entry name" value="Iron/manganese superoxide dismutase, C-terminal domain"/>
    <property type="match status" value="1"/>
</dbReference>
<dbReference type="InterPro" id="IPR050265">
    <property type="entry name" value="Fe/Mn_Superoxide_Dismutase"/>
</dbReference>
<dbReference type="InterPro" id="IPR001189">
    <property type="entry name" value="Mn/Fe_SOD"/>
</dbReference>
<dbReference type="InterPro" id="IPR019833">
    <property type="entry name" value="Mn/Fe_SOD_BS"/>
</dbReference>
<dbReference type="InterPro" id="IPR019832">
    <property type="entry name" value="Mn/Fe_SOD_C"/>
</dbReference>
<dbReference type="InterPro" id="IPR019831">
    <property type="entry name" value="Mn/Fe_SOD_N"/>
</dbReference>
<dbReference type="InterPro" id="IPR036324">
    <property type="entry name" value="Mn/Fe_SOD_N_sf"/>
</dbReference>
<dbReference type="InterPro" id="IPR036314">
    <property type="entry name" value="SOD_C_sf"/>
</dbReference>
<dbReference type="PANTHER" id="PTHR11404">
    <property type="entry name" value="SUPEROXIDE DISMUTASE 2"/>
    <property type="match status" value="1"/>
</dbReference>
<dbReference type="PANTHER" id="PTHR11404:SF6">
    <property type="entry name" value="SUPEROXIDE DISMUTASE [MN], MITOCHONDRIAL"/>
    <property type="match status" value="1"/>
</dbReference>
<dbReference type="Pfam" id="PF02777">
    <property type="entry name" value="Sod_Fe_C"/>
    <property type="match status" value="1"/>
</dbReference>
<dbReference type="Pfam" id="PF00081">
    <property type="entry name" value="Sod_Fe_N"/>
    <property type="match status" value="1"/>
</dbReference>
<dbReference type="PIRSF" id="PIRSF000349">
    <property type="entry name" value="SODismutase"/>
    <property type="match status" value="1"/>
</dbReference>
<dbReference type="PRINTS" id="PR01703">
    <property type="entry name" value="MNSODISMTASE"/>
</dbReference>
<dbReference type="SUPFAM" id="SSF54719">
    <property type="entry name" value="Fe,Mn superoxide dismutase (SOD), C-terminal domain"/>
    <property type="match status" value="1"/>
</dbReference>
<dbReference type="SUPFAM" id="SSF46609">
    <property type="entry name" value="Fe,Mn superoxide dismutase (SOD), N-terminal domain"/>
    <property type="match status" value="1"/>
</dbReference>
<dbReference type="PROSITE" id="PS00088">
    <property type="entry name" value="SOD_MN"/>
    <property type="match status" value="1"/>
</dbReference>
<reference key="1">
    <citation type="submission" date="2005-07" db="EMBL/GenBank/DDBJ databases">
        <title>Analysis of gene expression in cynomolgus monkey tissues by macaque cDNA oligo-chips.</title>
        <authorList>
            <person name="Kobayashi M."/>
            <person name="Tanuma R."/>
            <person name="Hirata M."/>
            <person name="Osada N."/>
            <person name="Kusuda J."/>
            <person name="Sugano S."/>
            <person name="Hashimoto K."/>
        </authorList>
    </citation>
    <scope>NUCLEOTIDE SEQUENCE [LARGE SCALE MRNA]</scope>
    <source>
        <tissue>Parietal cortex</tissue>
    </source>
</reference>
<reference key="2">
    <citation type="journal article" date="2002" name="Gene">
        <title>Structure, molecular evolution, and gene expression of primate superoxide dismutases.</title>
        <authorList>
            <person name="Fukuhara R."/>
            <person name="Tezuka T."/>
            <person name="Kageyama T."/>
        </authorList>
    </citation>
    <scope>NUCLEOTIDE SEQUENCE [MRNA] OF 25-222</scope>
</reference>
<organism>
    <name type="scientific">Macaca fascicularis</name>
    <name type="common">Crab-eating macaque</name>
    <name type="synonym">Cynomolgus monkey</name>
    <dbReference type="NCBI Taxonomy" id="9541"/>
    <lineage>
        <taxon>Eukaryota</taxon>
        <taxon>Metazoa</taxon>
        <taxon>Chordata</taxon>
        <taxon>Craniata</taxon>
        <taxon>Vertebrata</taxon>
        <taxon>Euteleostomi</taxon>
        <taxon>Mammalia</taxon>
        <taxon>Eutheria</taxon>
        <taxon>Euarchontoglires</taxon>
        <taxon>Primates</taxon>
        <taxon>Haplorrhini</taxon>
        <taxon>Catarrhini</taxon>
        <taxon>Cercopithecidae</taxon>
        <taxon>Cercopithecinae</taxon>
        <taxon>Macaca</taxon>
    </lineage>
</organism>
<sequence>MLSRAVCGTGRQLAPALGYLGSRQKHSLPDLPYDYGALEPHINAQIMQLHHSKHHAAYVNNLNVTEEKYQEALAKGDVTAQIALQPALKFNGGGHINHSIFWTNLSPNGGGEPKGELLEAIKRDFGSFEKFKEKLTAASVGVQGSGWGWLGFNKERGQLQIAACPNQDPLQGTTGLIPLLGIDVWEHAYYLQYKNVRPDYLKAIWNVINWENVTERYMACKK</sequence>
<name>SODM_MACFA</name>
<gene>
    <name type="primary">SOD2</name>
    <name type="ORF">QnpA-14761</name>
</gene>
<evidence type="ECO:0000250" key="1"/>
<evidence type="ECO:0000250" key="2">
    <source>
        <dbReference type="UniProtKB" id="P04179"/>
    </source>
</evidence>
<evidence type="ECO:0000250" key="3">
    <source>
        <dbReference type="UniProtKB" id="P07895"/>
    </source>
</evidence>
<evidence type="ECO:0000250" key="4">
    <source>
        <dbReference type="UniProtKB" id="P09671"/>
    </source>
</evidence>
<evidence type="ECO:0000305" key="5"/>